<gene>
    <name evidence="6" type="primary">ddmB</name>
</gene>
<sequence length="105" mass="11421">MPQITVVNQSGEESSVEASEGRTLMEVIRDSGFDELLALCGGCCSCATCHVHIDPAFMDKLPEMSEDENDLLDSSDHRNEYSRLSCQIPVTGALEGIKVTIAQED</sequence>
<proteinExistence type="evidence at protein level"/>
<comment type="function">
    <text evidence="3 4 5">Component of the dicamba O-demethylase multicomponent enzyme system involved in the degradation of the herbicide dicamba (PubMed:15820213, PubMed:15855162, PubMed:16535584). In vitro, functions as an intermediate electron transfer protein (PubMed:15820213, PubMed:15855162, PubMed:16535584).</text>
</comment>
<comment type="cofactor">
    <cofactor evidence="3">
        <name>[2Fe-2S] cluster</name>
        <dbReference type="ChEBI" id="CHEBI:190135"/>
    </cofactor>
    <text evidence="1">Binds 1 [2Fe-2S] cluster.</text>
</comment>
<comment type="subunit">
    <text evidence="3 4 5">Monomer (PubMed:15820213). The dicamba O-demethylase multicomponent enzyme system is composed of an oxygenase component (DdmC) and an electron transfer component formed by a ferredoxin reductase (DdmA1) and a ferredoxin (DdmB) (PubMed:15820213, PubMed:15855162, PubMed:16535584). In vitro, dicamba O-demethylase assays in which DdmA2 is substituted for DdmA1 demonstrate that the two enzymes possess nearly identical activities (PubMed:15855162).</text>
</comment>
<comment type="similarity">
    <text evidence="8">Belongs to the adrenodoxin/putidaredoxin family.</text>
</comment>
<evidence type="ECO:0000250" key="1">
    <source>
        <dbReference type="UniProtKB" id="P80306"/>
    </source>
</evidence>
<evidence type="ECO:0000255" key="2">
    <source>
        <dbReference type="PROSITE-ProRule" id="PRU00465"/>
    </source>
</evidence>
<evidence type="ECO:0000269" key="3">
    <source>
    </source>
</evidence>
<evidence type="ECO:0000269" key="4">
    <source>
    </source>
</evidence>
<evidence type="ECO:0000269" key="5">
    <source>
    </source>
</evidence>
<evidence type="ECO:0000303" key="6">
    <source>
    </source>
</evidence>
<evidence type="ECO:0000303" key="7">
    <source>
    </source>
</evidence>
<evidence type="ECO:0000305" key="8"/>
<evidence type="ECO:0000312" key="9">
    <source>
        <dbReference type="EMBL" id="AAV53698.1"/>
    </source>
</evidence>
<dbReference type="EMBL" id="AY786442">
    <property type="protein sequence ID" value="AAV53698.1"/>
    <property type="molecule type" value="Genomic_DNA"/>
</dbReference>
<dbReference type="SMR" id="Q5S3I4"/>
<dbReference type="GO" id="GO:0051537">
    <property type="term" value="F:2 iron, 2 sulfur cluster binding"/>
    <property type="evidence" value="ECO:0007669"/>
    <property type="project" value="UniProtKB-KW"/>
</dbReference>
<dbReference type="GO" id="GO:0009055">
    <property type="term" value="F:electron transfer activity"/>
    <property type="evidence" value="ECO:0007669"/>
    <property type="project" value="TreeGrafter"/>
</dbReference>
<dbReference type="GO" id="GO:0046872">
    <property type="term" value="F:metal ion binding"/>
    <property type="evidence" value="ECO:0007669"/>
    <property type="project" value="UniProtKB-KW"/>
</dbReference>
<dbReference type="GO" id="GO:0140647">
    <property type="term" value="P:P450-containing electron transport chain"/>
    <property type="evidence" value="ECO:0007669"/>
    <property type="project" value="InterPro"/>
</dbReference>
<dbReference type="CDD" id="cd00207">
    <property type="entry name" value="fer2"/>
    <property type="match status" value="1"/>
</dbReference>
<dbReference type="Gene3D" id="3.10.20.30">
    <property type="match status" value="1"/>
</dbReference>
<dbReference type="InterPro" id="IPR036010">
    <property type="entry name" value="2Fe-2S_ferredoxin-like_sf"/>
</dbReference>
<dbReference type="InterPro" id="IPR001041">
    <property type="entry name" value="2Fe-2S_ferredoxin-type"/>
</dbReference>
<dbReference type="InterPro" id="IPR001055">
    <property type="entry name" value="Adrenodoxin-like"/>
</dbReference>
<dbReference type="InterPro" id="IPR012675">
    <property type="entry name" value="Beta-grasp_dom_sf"/>
</dbReference>
<dbReference type="PANTHER" id="PTHR23426:SF65">
    <property type="entry name" value="FERREDOXIN-2, MITOCHONDRIAL"/>
    <property type="match status" value="1"/>
</dbReference>
<dbReference type="PANTHER" id="PTHR23426">
    <property type="entry name" value="FERREDOXIN/ADRENODOXIN"/>
    <property type="match status" value="1"/>
</dbReference>
<dbReference type="Pfam" id="PF00111">
    <property type="entry name" value="Fer2"/>
    <property type="match status" value="1"/>
</dbReference>
<dbReference type="PRINTS" id="PR00355">
    <property type="entry name" value="ADRENODOXIN"/>
</dbReference>
<dbReference type="SUPFAM" id="SSF54292">
    <property type="entry name" value="2Fe-2S ferredoxin-like"/>
    <property type="match status" value="1"/>
</dbReference>
<dbReference type="PROSITE" id="PS51085">
    <property type="entry name" value="2FE2S_FER_2"/>
    <property type="match status" value="1"/>
</dbReference>
<organism>
    <name type="scientific">Stenotrophomonas maltophilia</name>
    <name type="common">Pseudomonas maltophilia</name>
    <name type="synonym">Xanthomonas maltophilia</name>
    <dbReference type="NCBI Taxonomy" id="40324"/>
    <lineage>
        <taxon>Bacteria</taxon>
        <taxon>Pseudomonadati</taxon>
        <taxon>Pseudomonadota</taxon>
        <taxon>Gammaproteobacteria</taxon>
        <taxon>Lysobacterales</taxon>
        <taxon>Lysobacteraceae</taxon>
        <taxon>Stenotrophomonas</taxon>
        <taxon>Stenotrophomonas maltophilia group</taxon>
    </lineage>
</organism>
<feature type="chain" id="PRO_0000445254" description="Dicamba O-demethylase, ferredoxin component">
    <location>
        <begin position="1"/>
        <end position="105"/>
    </location>
</feature>
<feature type="domain" description="2Fe-2S ferredoxin-type" evidence="2">
    <location>
        <begin position="2"/>
        <end position="105"/>
    </location>
</feature>
<feature type="binding site" evidence="1">
    <location>
        <position position="40"/>
    </location>
    <ligand>
        <name>[2Fe-2S] cluster</name>
        <dbReference type="ChEBI" id="CHEBI:190135"/>
    </ligand>
</feature>
<feature type="binding site" evidence="1">
    <location>
        <position position="46"/>
    </location>
    <ligand>
        <name>[2Fe-2S] cluster</name>
        <dbReference type="ChEBI" id="CHEBI:190135"/>
    </ligand>
</feature>
<feature type="binding site" evidence="1">
    <location>
        <position position="49"/>
    </location>
    <ligand>
        <name>[2Fe-2S] cluster</name>
        <dbReference type="ChEBI" id="CHEBI:190135"/>
    </ligand>
</feature>
<feature type="binding site" evidence="1">
    <location>
        <position position="86"/>
    </location>
    <ligand>
        <name>[2Fe-2S] cluster</name>
        <dbReference type="ChEBI" id="CHEBI:190135"/>
    </ligand>
</feature>
<name>DDMB_STEMA</name>
<reference key="1">
    <citation type="journal article" date="2005" name="J. Biol. Chem.">
        <title>A three-component dicamba O-demethylase from Pseudomonas maltophilia, strain DI-6: gene isolation, characterization, and heterologous expression.</title>
        <authorList>
            <person name="Herman P.L."/>
            <person name="Behrens M."/>
            <person name="Chakraborty S."/>
            <person name="Chrastil B.M."/>
            <person name="Barycki J."/>
            <person name="Weeks D.P."/>
        </authorList>
    </citation>
    <scope>NUCLEOTIDE SEQUENCE [GENOMIC DNA]</scope>
    <scope>FUNCTION</scope>
    <scope>SUBUNIT</scope>
    <source>
        <strain evidence="9">DI-6</strain>
    </source>
</reference>
<reference key="2">
    <citation type="journal article" date="2005" name="Arch. Biochem. Biophys.">
        <title>A three-component dicamba O-demethylase from Pseudomonas maltophilia, strain DI-6: purification and characterization.</title>
        <authorList>
            <person name="Chakraborty S."/>
            <person name="Behrens M."/>
            <person name="Herman P.L."/>
            <person name="Arendsen A.F."/>
            <person name="Hagen W.R."/>
            <person name="Carlson D.L."/>
            <person name="Wang X.Z."/>
            <person name="Weeks D.P."/>
        </authorList>
    </citation>
    <scope>PROTEIN SEQUENCE OF 1-26</scope>
    <scope>FUNCTION</scope>
    <scope>COFACTOR</scope>
    <scope>SUBUNIT</scope>
    <source>
        <strain>DI-6</strain>
    </source>
</reference>
<reference key="3">
    <citation type="journal article" date="1997" name="Appl. Environ. Microbiol.">
        <title>A three-component enzyme system catalyzes the O-demethylation of the herbicide dicamba in Pseudomonas maltophilia DI-6.</title>
        <authorList>
            <person name="Wang X."/>
            <person name="Li B."/>
            <person name="Herman P.L."/>
            <person name="Weeks D.P."/>
        </authorList>
    </citation>
    <scope>FUNCTION</scope>
    <scope>SUBUNIT</scope>
    <source>
        <strain>DI-6</strain>
    </source>
</reference>
<keyword id="KW-0001">2Fe-2S</keyword>
<keyword id="KW-0903">Direct protein sequencing</keyword>
<keyword id="KW-0249">Electron transport</keyword>
<keyword id="KW-0408">Iron</keyword>
<keyword id="KW-0411">Iron-sulfur</keyword>
<keyword id="KW-0479">Metal-binding</keyword>
<keyword id="KW-0813">Transport</keyword>
<protein>
    <recommendedName>
        <fullName evidence="7">Dicamba O-demethylase, ferredoxin component</fullName>
    </recommendedName>
</protein>
<accession>Q5S3I4</accession>